<accession>A9FGG6</accession>
<comment type="function">
    <text evidence="1">One of the primary rRNA binding proteins, it binds directly to 16S rRNA central domain where it helps coordinate assembly of the platform of the 30S subunit.</text>
</comment>
<comment type="subunit">
    <text evidence="1">Part of the 30S ribosomal subunit. Contacts proteins S5 and S12.</text>
</comment>
<comment type="similarity">
    <text evidence="1">Belongs to the universal ribosomal protein uS8 family.</text>
</comment>
<feature type="chain" id="PRO_1000085947" description="Small ribosomal subunit protein uS8">
    <location>
        <begin position="1"/>
        <end position="131"/>
    </location>
</feature>
<protein>
    <recommendedName>
        <fullName evidence="1">Small ribosomal subunit protein uS8</fullName>
    </recommendedName>
    <alternativeName>
        <fullName evidence="2">30S ribosomal protein S8</fullName>
    </alternativeName>
</protein>
<gene>
    <name evidence="1" type="primary">rpsH</name>
    <name type="ordered locus">sce7949</name>
</gene>
<sequence length="131" mass="14715">MMTDPIADMLTRIRNAALARHDRTEVPASRIKAAVAEILKSEGFIADVRETEGEGPKKLTIVLKYGRDRQSAIDGVRRVSRPGRRVYVRHDRIPRVFSGLGISILSTSRGLMSDRDARRLKMGGELICEVW</sequence>
<dbReference type="EMBL" id="AM746676">
    <property type="protein sequence ID" value="CAN98119.1"/>
    <property type="molecule type" value="Genomic_DNA"/>
</dbReference>
<dbReference type="RefSeq" id="WP_012240558.1">
    <property type="nucleotide sequence ID" value="NC_010162.1"/>
</dbReference>
<dbReference type="SMR" id="A9FGG6"/>
<dbReference type="STRING" id="448385.sce7949"/>
<dbReference type="KEGG" id="scl:sce7949"/>
<dbReference type="eggNOG" id="COG0096">
    <property type="taxonomic scope" value="Bacteria"/>
</dbReference>
<dbReference type="HOGENOM" id="CLU_098428_0_2_7"/>
<dbReference type="OrthoDB" id="9802617at2"/>
<dbReference type="BioCyc" id="SCEL448385:SCE_RS40690-MONOMER"/>
<dbReference type="Proteomes" id="UP000002139">
    <property type="component" value="Chromosome"/>
</dbReference>
<dbReference type="GO" id="GO:1990904">
    <property type="term" value="C:ribonucleoprotein complex"/>
    <property type="evidence" value="ECO:0007669"/>
    <property type="project" value="UniProtKB-KW"/>
</dbReference>
<dbReference type="GO" id="GO:0005840">
    <property type="term" value="C:ribosome"/>
    <property type="evidence" value="ECO:0007669"/>
    <property type="project" value="UniProtKB-KW"/>
</dbReference>
<dbReference type="GO" id="GO:0019843">
    <property type="term" value="F:rRNA binding"/>
    <property type="evidence" value="ECO:0007669"/>
    <property type="project" value="UniProtKB-UniRule"/>
</dbReference>
<dbReference type="GO" id="GO:0003735">
    <property type="term" value="F:structural constituent of ribosome"/>
    <property type="evidence" value="ECO:0007669"/>
    <property type="project" value="InterPro"/>
</dbReference>
<dbReference type="GO" id="GO:0006412">
    <property type="term" value="P:translation"/>
    <property type="evidence" value="ECO:0007669"/>
    <property type="project" value="UniProtKB-UniRule"/>
</dbReference>
<dbReference type="FunFam" id="3.30.1370.30:FF:000002">
    <property type="entry name" value="30S ribosomal protein S8"/>
    <property type="match status" value="1"/>
</dbReference>
<dbReference type="FunFam" id="3.30.1490.10:FF:000001">
    <property type="entry name" value="30S ribosomal protein S8"/>
    <property type="match status" value="1"/>
</dbReference>
<dbReference type="Gene3D" id="3.30.1370.30">
    <property type="match status" value="1"/>
</dbReference>
<dbReference type="Gene3D" id="3.30.1490.10">
    <property type="match status" value="1"/>
</dbReference>
<dbReference type="HAMAP" id="MF_01302_B">
    <property type="entry name" value="Ribosomal_uS8_B"/>
    <property type="match status" value="1"/>
</dbReference>
<dbReference type="InterPro" id="IPR000630">
    <property type="entry name" value="Ribosomal_uS8"/>
</dbReference>
<dbReference type="InterPro" id="IPR047863">
    <property type="entry name" value="Ribosomal_uS8_CS"/>
</dbReference>
<dbReference type="InterPro" id="IPR035987">
    <property type="entry name" value="Ribosomal_uS8_sf"/>
</dbReference>
<dbReference type="NCBIfam" id="NF001109">
    <property type="entry name" value="PRK00136.1"/>
    <property type="match status" value="1"/>
</dbReference>
<dbReference type="PANTHER" id="PTHR11758">
    <property type="entry name" value="40S RIBOSOMAL PROTEIN S15A"/>
    <property type="match status" value="1"/>
</dbReference>
<dbReference type="Pfam" id="PF00410">
    <property type="entry name" value="Ribosomal_S8"/>
    <property type="match status" value="1"/>
</dbReference>
<dbReference type="SUPFAM" id="SSF56047">
    <property type="entry name" value="Ribosomal protein S8"/>
    <property type="match status" value="1"/>
</dbReference>
<dbReference type="PROSITE" id="PS00053">
    <property type="entry name" value="RIBOSOMAL_S8"/>
    <property type="match status" value="1"/>
</dbReference>
<keyword id="KW-1185">Reference proteome</keyword>
<keyword id="KW-0687">Ribonucleoprotein</keyword>
<keyword id="KW-0689">Ribosomal protein</keyword>
<keyword id="KW-0694">RNA-binding</keyword>
<keyword id="KW-0699">rRNA-binding</keyword>
<evidence type="ECO:0000255" key="1">
    <source>
        <dbReference type="HAMAP-Rule" id="MF_01302"/>
    </source>
</evidence>
<evidence type="ECO:0000305" key="2"/>
<name>RS8_SORC5</name>
<organism>
    <name type="scientific">Sorangium cellulosum (strain So ce56)</name>
    <name type="common">Polyangium cellulosum (strain So ce56)</name>
    <dbReference type="NCBI Taxonomy" id="448385"/>
    <lineage>
        <taxon>Bacteria</taxon>
        <taxon>Pseudomonadati</taxon>
        <taxon>Myxococcota</taxon>
        <taxon>Polyangia</taxon>
        <taxon>Polyangiales</taxon>
        <taxon>Polyangiaceae</taxon>
        <taxon>Sorangium</taxon>
    </lineage>
</organism>
<proteinExistence type="inferred from homology"/>
<reference key="1">
    <citation type="journal article" date="2007" name="Nat. Biotechnol.">
        <title>Complete genome sequence of the myxobacterium Sorangium cellulosum.</title>
        <authorList>
            <person name="Schneiker S."/>
            <person name="Perlova O."/>
            <person name="Kaiser O."/>
            <person name="Gerth K."/>
            <person name="Alici A."/>
            <person name="Altmeyer M.O."/>
            <person name="Bartels D."/>
            <person name="Bekel T."/>
            <person name="Beyer S."/>
            <person name="Bode E."/>
            <person name="Bode H.B."/>
            <person name="Bolten C.J."/>
            <person name="Choudhuri J.V."/>
            <person name="Doss S."/>
            <person name="Elnakady Y.A."/>
            <person name="Frank B."/>
            <person name="Gaigalat L."/>
            <person name="Goesmann A."/>
            <person name="Groeger C."/>
            <person name="Gross F."/>
            <person name="Jelsbak L."/>
            <person name="Jelsbak L."/>
            <person name="Kalinowski J."/>
            <person name="Kegler C."/>
            <person name="Knauber T."/>
            <person name="Konietzny S."/>
            <person name="Kopp M."/>
            <person name="Krause L."/>
            <person name="Krug D."/>
            <person name="Linke B."/>
            <person name="Mahmud T."/>
            <person name="Martinez-Arias R."/>
            <person name="McHardy A.C."/>
            <person name="Merai M."/>
            <person name="Meyer F."/>
            <person name="Mormann S."/>
            <person name="Munoz-Dorado J."/>
            <person name="Perez J."/>
            <person name="Pradella S."/>
            <person name="Rachid S."/>
            <person name="Raddatz G."/>
            <person name="Rosenau F."/>
            <person name="Rueckert C."/>
            <person name="Sasse F."/>
            <person name="Scharfe M."/>
            <person name="Schuster S.C."/>
            <person name="Suen G."/>
            <person name="Treuner-Lange A."/>
            <person name="Velicer G.J."/>
            <person name="Vorholter F.-J."/>
            <person name="Weissman K.J."/>
            <person name="Welch R.D."/>
            <person name="Wenzel S.C."/>
            <person name="Whitworth D.E."/>
            <person name="Wilhelm S."/>
            <person name="Wittmann C."/>
            <person name="Bloecker H."/>
            <person name="Puehler A."/>
            <person name="Mueller R."/>
        </authorList>
    </citation>
    <scope>NUCLEOTIDE SEQUENCE [LARGE SCALE GENOMIC DNA]</scope>
    <source>
        <strain>So ce56</strain>
    </source>
</reference>